<reference key="1">
    <citation type="journal article" date="2006" name="PLoS Genet.">
        <title>Secrets of soil survival revealed by the genome sequence of Arthrobacter aurescens TC1.</title>
        <authorList>
            <person name="Mongodin E.F."/>
            <person name="Shapir N."/>
            <person name="Daugherty S.C."/>
            <person name="DeBoy R.T."/>
            <person name="Emerson J.B."/>
            <person name="Shvartzbeyn A."/>
            <person name="Radune D."/>
            <person name="Vamathevan J."/>
            <person name="Riggs F."/>
            <person name="Grinberg V."/>
            <person name="Khouri H.M."/>
            <person name="Wackett L.P."/>
            <person name="Nelson K.E."/>
            <person name="Sadowsky M.J."/>
        </authorList>
    </citation>
    <scope>NUCLEOTIDE SEQUENCE [LARGE SCALE GENOMIC DNA]</scope>
    <source>
        <strain>TC1</strain>
    </source>
</reference>
<organism>
    <name type="scientific">Paenarthrobacter aurescens (strain TC1)</name>
    <dbReference type="NCBI Taxonomy" id="290340"/>
    <lineage>
        <taxon>Bacteria</taxon>
        <taxon>Bacillati</taxon>
        <taxon>Actinomycetota</taxon>
        <taxon>Actinomycetes</taxon>
        <taxon>Micrococcales</taxon>
        <taxon>Micrococcaceae</taxon>
        <taxon>Paenarthrobacter</taxon>
    </lineage>
</organism>
<keyword id="KW-0963">Cytoplasm</keyword>
<keyword id="KW-0238">DNA-binding</keyword>
<keyword id="KW-0804">Transcription</keyword>
<keyword id="KW-0805">Transcription regulation</keyword>
<gene>
    <name type="ordered locus">AAur_2300</name>
</gene>
<feature type="chain" id="PRO_1000045270" description="Probable transcriptional regulatory protein AAur_2300">
    <location>
        <begin position="1"/>
        <end position="251"/>
    </location>
</feature>
<name>Y2300_PAEAT</name>
<accession>A1R727</accession>
<dbReference type="EMBL" id="CP000474">
    <property type="protein sequence ID" value="ABM08297.1"/>
    <property type="molecule type" value="Genomic_DNA"/>
</dbReference>
<dbReference type="RefSeq" id="WP_011774983.1">
    <property type="nucleotide sequence ID" value="NC_008711.1"/>
</dbReference>
<dbReference type="SMR" id="A1R727"/>
<dbReference type="STRING" id="290340.AAur_2300"/>
<dbReference type="KEGG" id="aau:AAur_2300"/>
<dbReference type="eggNOG" id="COG0217">
    <property type="taxonomic scope" value="Bacteria"/>
</dbReference>
<dbReference type="HOGENOM" id="CLU_062974_2_2_11"/>
<dbReference type="OrthoDB" id="9781053at2"/>
<dbReference type="Proteomes" id="UP000000637">
    <property type="component" value="Chromosome"/>
</dbReference>
<dbReference type="GO" id="GO:0005829">
    <property type="term" value="C:cytosol"/>
    <property type="evidence" value="ECO:0007669"/>
    <property type="project" value="TreeGrafter"/>
</dbReference>
<dbReference type="GO" id="GO:0003677">
    <property type="term" value="F:DNA binding"/>
    <property type="evidence" value="ECO:0007669"/>
    <property type="project" value="UniProtKB-UniRule"/>
</dbReference>
<dbReference type="GO" id="GO:0006355">
    <property type="term" value="P:regulation of DNA-templated transcription"/>
    <property type="evidence" value="ECO:0007669"/>
    <property type="project" value="UniProtKB-UniRule"/>
</dbReference>
<dbReference type="FunFam" id="1.10.10.200:FF:000002">
    <property type="entry name" value="Probable transcriptional regulatory protein CLM62_37755"/>
    <property type="match status" value="1"/>
</dbReference>
<dbReference type="Gene3D" id="1.10.10.200">
    <property type="match status" value="1"/>
</dbReference>
<dbReference type="Gene3D" id="3.30.70.980">
    <property type="match status" value="2"/>
</dbReference>
<dbReference type="HAMAP" id="MF_00693">
    <property type="entry name" value="Transcrip_reg_TACO1"/>
    <property type="match status" value="1"/>
</dbReference>
<dbReference type="InterPro" id="IPR017856">
    <property type="entry name" value="Integrase-like_N"/>
</dbReference>
<dbReference type="InterPro" id="IPR048300">
    <property type="entry name" value="TACO1_YebC-like_2nd/3rd_dom"/>
</dbReference>
<dbReference type="InterPro" id="IPR049083">
    <property type="entry name" value="TACO1_YebC_N"/>
</dbReference>
<dbReference type="InterPro" id="IPR002876">
    <property type="entry name" value="Transcrip_reg_TACO1-like"/>
</dbReference>
<dbReference type="InterPro" id="IPR026564">
    <property type="entry name" value="Transcrip_reg_TACO1-like_dom3"/>
</dbReference>
<dbReference type="InterPro" id="IPR029072">
    <property type="entry name" value="YebC-like"/>
</dbReference>
<dbReference type="NCBIfam" id="NF001030">
    <property type="entry name" value="PRK00110.1"/>
    <property type="match status" value="1"/>
</dbReference>
<dbReference type="NCBIfam" id="NF009044">
    <property type="entry name" value="PRK12378.1"/>
    <property type="match status" value="1"/>
</dbReference>
<dbReference type="NCBIfam" id="TIGR01033">
    <property type="entry name" value="YebC/PmpR family DNA-binding transcriptional regulator"/>
    <property type="match status" value="1"/>
</dbReference>
<dbReference type="PANTHER" id="PTHR12532:SF6">
    <property type="entry name" value="TRANSCRIPTIONAL REGULATORY PROTEIN YEBC-RELATED"/>
    <property type="match status" value="1"/>
</dbReference>
<dbReference type="PANTHER" id="PTHR12532">
    <property type="entry name" value="TRANSLATIONAL ACTIVATOR OF CYTOCHROME C OXIDASE 1"/>
    <property type="match status" value="1"/>
</dbReference>
<dbReference type="Pfam" id="PF20772">
    <property type="entry name" value="TACO1_YebC_N"/>
    <property type="match status" value="1"/>
</dbReference>
<dbReference type="Pfam" id="PF01709">
    <property type="entry name" value="Transcrip_reg"/>
    <property type="match status" value="1"/>
</dbReference>
<dbReference type="SUPFAM" id="SSF75625">
    <property type="entry name" value="YebC-like"/>
    <property type="match status" value="1"/>
</dbReference>
<sequence>MSGHSKWATTKHKKAIIDGRRAKSFAKLIKNIEVAARMGGPDLAGNPGLELAVTKAKKTSVPNDNIDRAIKRGAGLTGEVVDYTEIMYEARGPQGSALLIECLTDNKNRAASEVRLAISRNGGTIADPGSVSYLFARKGVVVLPKNGLSEDDILMAVLEAGAEEVKDSGENWEIHSEPSDLQAIRDALKEAGIDYETDEAEFVPSMQVDLDVDGAKKFMKLVDALEDLDDVQNVYSNADLSEEVQAALDSE</sequence>
<proteinExistence type="inferred from homology"/>
<comment type="subcellular location">
    <subcellularLocation>
        <location evidence="1">Cytoplasm</location>
    </subcellularLocation>
</comment>
<comment type="similarity">
    <text evidence="1">Belongs to the TACO1 family.</text>
</comment>
<evidence type="ECO:0000255" key="1">
    <source>
        <dbReference type="HAMAP-Rule" id="MF_00693"/>
    </source>
</evidence>
<protein>
    <recommendedName>
        <fullName evidence="1">Probable transcriptional regulatory protein AAur_2300</fullName>
    </recommendedName>
</protein>